<comment type="function">
    <text evidence="1">Protease subunit of a proteasome-like degradation complex believed to be a general protein degrading machinery.</text>
</comment>
<comment type="catalytic activity">
    <reaction evidence="1">
        <text>ATP-dependent cleavage of peptide bonds with broad specificity.</text>
        <dbReference type="EC" id="3.4.25.2"/>
    </reaction>
</comment>
<comment type="activity regulation">
    <text evidence="1">Allosterically activated by HslU binding.</text>
</comment>
<comment type="subunit">
    <text evidence="1">A double ring-shaped homohexamer of HslV is capped on each side by a ring-shaped HslU homohexamer. The assembly of the HslU/HslV complex is dependent on binding of ATP.</text>
</comment>
<comment type="subcellular location">
    <subcellularLocation>
        <location evidence="1">Cytoplasm</location>
    </subcellularLocation>
</comment>
<comment type="induction">
    <text evidence="1">By heat shock.</text>
</comment>
<comment type="similarity">
    <text evidence="1">Belongs to the peptidase T1B family. HslV subfamily.</text>
</comment>
<keyword id="KW-0021">Allosteric enzyme</keyword>
<keyword id="KW-0963">Cytoplasm</keyword>
<keyword id="KW-0378">Hydrolase</keyword>
<keyword id="KW-0479">Metal-binding</keyword>
<keyword id="KW-0645">Protease</keyword>
<keyword id="KW-0915">Sodium</keyword>
<keyword id="KW-0346">Stress response</keyword>
<keyword id="KW-0888">Threonine protease</keyword>
<evidence type="ECO:0000255" key="1">
    <source>
        <dbReference type="HAMAP-Rule" id="MF_00248"/>
    </source>
</evidence>
<organism>
    <name type="scientific">Escherichia fergusonii (strain ATCC 35469 / DSM 13698 / CCUG 18766 / IAM 14443 / JCM 21226 / LMG 7866 / NBRC 102419 / NCTC 12128 / CDC 0568-73)</name>
    <dbReference type="NCBI Taxonomy" id="585054"/>
    <lineage>
        <taxon>Bacteria</taxon>
        <taxon>Pseudomonadati</taxon>
        <taxon>Pseudomonadota</taxon>
        <taxon>Gammaproteobacteria</taxon>
        <taxon>Enterobacterales</taxon>
        <taxon>Enterobacteriaceae</taxon>
        <taxon>Escherichia</taxon>
    </lineage>
</organism>
<reference key="1">
    <citation type="journal article" date="2009" name="PLoS Genet.">
        <title>Organised genome dynamics in the Escherichia coli species results in highly diverse adaptive paths.</title>
        <authorList>
            <person name="Touchon M."/>
            <person name="Hoede C."/>
            <person name="Tenaillon O."/>
            <person name="Barbe V."/>
            <person name="Baeriswyl S."/>
            <person name="Bidet P."/>
            <person name="Bingen E."/>
            <person name="Bonacorsi S."/>
            <person name="Bouchier C."/>
            <person name="Bouvet O."/>
            <person name="Calteau A."/>
            <person name="Chiapello H."/>
            <person name="Clermont O."/>
            <person name="Cruveiller S."/>
            <person name="Danchin A."/>
            <person name="Diard M."/>
            <person name="Dossat C."/>
            <person name="Karoui M.E."/>
            <person name="Frapy E."/>
            <person name="Garry L."/>
            <person name="Ghigo J.M."/>
            <person name="Gilles A.M."/>
            <person name="Johnson J."/>
            <person name="Le Bouguenec C."/>
            <person name="Lescat M."/>
            <person name="Mangenot S."/>
            <person name="Martinez-Jehanne V."/>
            <person name="Matic I."/>
            <person name="Nassif X."/>
            <person name="Oztas S."/>
            <person name="Petit M.A."/>
            <person name="Pichon C."/>
            <person name="Rouy Z."/>
            <person name="Ruf C.S."/>
            <person name="Schneider D."/>
            <person name="Tourret J."/>
            <person name="Vacherie B."/>
            <person name="Vallenet D."/>
            <person name="Medigue C."/>
            <person name="Rocha E.P.C."/>
            <person name="Denamur E."/>
        </authorList>
    </citation>
    <scope>NUCLEOTIDE SEQUENCE [LARGE SCALE GENOMIC DNA]</scope>
    <source>
        <strain>ATCC 35469 / DSM 13698 / BCRC 15582 / CCUG 18766 / IAM 14443 / JCM 21226 / LMG 7866 / NBRC 102419 / NCTC 12128 / CDC 0568-73</strain>
    </source>
</reference>
<accession>B7LUS2</accession>
<protein>
    <recommendedName>
        <fullName evidence="1">ATP-dependent protease subunit HslV</fullName>
        <ecNumber evidence="1">3.4.25.2</ecNumber>
    </recommendedName>
    <alternativeName>
        <fullName evidence="1">Heat shock protein HslV</fullName>
    </alternativeName>
</protein>
<feature type="chain" id="PRO_1000192683" description="ATP-dependent protease subunit HslV">
    <location>
        <begin position="1"/>
        <end position="176"/>
    </location>
</feature>
<feature type="active site" evidence="1">
    <location>
        <position position="2"/>
    </location>
</feature>
<feature type="binding site" evidence="1">
    <location>
        <position position="157"/>
    </location>
    <ligand>
        <name>Na(+)</name>
        <dbReference type="ChEBI" id="CHEBI:29101"/>
    </ligand>
</feature>
<feature type="binding site" evidence="1">
    <location>
        <position position="160"/>
    </location>
    <ligand>
        <name>Na(+)</name>
        <dbReference type="ChEBI" id="CHEBI:29101"/>
    </ligand>
</feature>
<feature type="binding site" evidence="1">
    <location>
        <position position="163"/>
    </location>
    <ligand>
        <name>Na(+)</name>
        <dbReference type="ChEBI" id="CHEBI:29101"/>
    </ligand>
</feature>
<name>HSLV_ESCF3</name>
<proteinExistence type="inferred from homology"/>
<sequence length="176" mass="19093">MTTIVSVRRNGHVVIAGDGQATLGNTVMKGNVKKVRRLYNDKVIAGFAGGTADAFTLFELFERKLEMHQGHLVKAAVELAKDWRTDRMLRKLEALLAVADETASLIITGNGDVVQPENDLIAIGSGGPYAQAAARALLENTELSAREIAEKALDIAGDICIYTNHFHTIEELSYKA</sequence>
<gene>
    <name evidence="1" type="primary">hslV</name>
    <name type="ordered locus">EFER_3840</name>
</gene>
<dbReference type="EC" id="3.4.25.2" evidence="1"/>
<dbReference type="EMBL" id="CU928158">
    <property type="protein sequence ID" value="CAQ91275.1"/>
    <property type="molecule type" value="Genomic_DNA"/>
</dbReference>
<dbReference type="RefSeq" id="WP_000208242.1">
    <property type="nucleotide sequence ID" value="NC_011740.1"/>
</dbReference>
<dbReference type="SMR" id="B7LUS2"/>
<dbReference type="MEROPS" id="T01.006"/>
<dbReference type="GeneID" id="93777966"/>
<dbReference type="KEGG" id="efe:EFER_3840"/>
<dbReference type="HOGENOM" id="CLU_093872_1_0_6"/>
<dbReference type="OrthoDB" id="9804884at2"/>
<dbReference type="Proteomes" id="UP000000745">
    <property type="component" value="Chromosome"/>
</dbReference>
<dbReference type="GO" id="GO:0009376">
    <property type="term" value="C:HslUV protease complex"/>
    <property type="evidence" value="ECO:0007669"/>
    <property type="project" value="UniProtKB-UniRule"/>
</dbReference>
<dbReference type="GO" id="GO:0005839">
    <property type="term" value="C:proteasome core complex"/>
    <property type="evidence" value="ECO:0007669"/>
    <property type="project" value="InterPro"/>
</dbReference>
<dbReference type="GO" id="GO:0046872">
    <property type="term" value="F:metal ion binding"/>
    <property type="evidence" value="ECO:0007669"/>
    <property type="project" value="UniProtKB-KW"/>
</dbReference>
<dbReference type="GO" id="GO:0004298">
    <property type="term" value="F:threonine-type endopeptidase activity"/>
    <property type="evidence" value="ECO:0007669"/>
    <property type="project" value="UniProtKB-KW"/>
</dbReference>
<dbReference type="GO" id="GO:0051603">
    <property type="term" value="P:proteolysis involved in protein catabolic process"/>
    <property type="evidence" value="ECO:0007669"/>
    <property type="project" value="InterPro"/>
</dbReference>
<dbReference type="CDD" id="cd01913">
    <property type="entry name" value="protease_HslV"/>
    <property type="match status" value="1"/>
</dbReference>
<dbReference type="FunFam" id="3.60.20.10:FF:000002">
    <property type="entry name" value="ATP-dependent protease subunit HslV"/>
    <property type="match status" value="1"/>
</dbReference>
<dbReference type="Gene3D" id="3.60.20.10">
    <property type="entry name" value="Glutamine Phosphoribosylpyrophosphate, subunit 1, domain 1"/>
    <property type="match status" value="1"/>
</dbReference>
<dbReference type="HAMAP" id="MF_00248">
    <property type="entry name" value="HslV"/>
    <property type="match status" value="1"/>
</dbReference>
<dbReference type="InterPro" id="IPR022281">
    <property type="entry name" value="ATP-dep_Prtase_HsIV_su"/>
</dbReference>
<dbReference type="InterPro" id="IPR029055">
    <property type="entry name" value="Ntn_hydrolases_N"/>
</dbReference>
<dbReference type="InterPro" id="IPR001353">
    <property type="entry name" value="Proteasome_sua/b"/>
</dbReference>
<dbReference type="InterPro" id="IPR023333">
    <property type="entry name" value="Proteasome_suB-type"/>
</dbReference>
<dbReference type="NCBIfam" id="TIGR03692">
    <property type="entry name" value="ATP_dep_HslV"/>
    <property type="match status" value="1"/>
</dbReference>
<dbReference type="NCBIfam" id="NF003964">
    <property type="entry name" value="PRK05456.1"/>
    <property type="match status" value="1"/>
</dbReference>
<dbReference type="PANTHER" id="PTHR32194:SF0">
    <property type="entry name" value="ATP-DEPENDENT PROTEASE SUBUNIT HSLV"/>
    <property type="match status" value="1"/>
</dbReference>
<dbReference type="PANTHER" id="PTHR32194">
    <property type="entry name" value="METALLOPROTEASE TLDD"/>
    <property type="match status" value="1"/>
</dbReference>
<dbReference type="Pfam" id="PF00227">
    <property type="entry name" value="Proteasome"/>
    <property type="match status" value="1"/>
</dbReference>
<dbReference type="PIRSF" id="PIRSF039093">
    <property type="entry name" value="HslV"/>
    <property type="match status" value="1"/>
</dbReference>
<dbReference type="SUPFAM" id="SSF56235">
    <property type="entry name" value="N-terminal nucleophile aminohydrolases (Ntn hydrolases)"/>
    <property type="match status" value="1"/>
</dbReference>
<dbReference type="PROSITE" id="PS51476">
    <property type="entry name" value="PROTEASOME_BETA_2"/>
    <property type="match status" value="1"/>
</dbReference>